<sequence>MESFEKLETLLGYSFKNKELLIEALSHPSLRQYHEYKYDKDYERLEFLGDAVLNLLITEILFKNFENYKEGNLAKIRSYLVCKETICIVGTKLALKDYIIMTHGEEVAGGRDNPNNIENATEALIAAIYLDSNIEITHNIIEKLWAEFMKVQNLTDYDPKTALQEWAQANSHHLPIYRLIKREGAAHSSIFTVLVKVKDYEQTCTGYSIKEAEKKAARSLLHRLK</sequence>
<gene>
    <name evidence="1" type="primary">rnc</name>
    <name type="ordered locus">RP117</name>
</gene>
<protein>
    <recommendedName>
        <fullName evidence="1">Ribonuclease 3</fullName>
        <ecNumber evidence="1">3.1.26.3</ecNumber>
    </recommendedName>
    <alternativeName>
        <fullName evidence="1">Ribonuclease III</fullName>
        <shortName evidence="1">RNase III</shortName>
    </alternativeName>
</protein>
<reference key="1">
    <citation type="journal article" date="1998" name="Nature">
        <title>The genome sequence of Rickettsia prowazekii and the origin of mitochondria.</title>
        <authorList>
            <person name="Andersson S.G.E."/>
            <person name="Zomorodipour A."/>
            <person name="Andersson J.O."/>
            <person name="Sicheritz-Ponten T."/>
            <person name="Alsmark U.C.M."/>
            <person name="Podowski R.M."/>
            <person name="Naeslund A.K."/>
            <person name="Eriksson A.-S."/>
            <person name="Winkler H.H."/>
            <person name="Kurland C.G."/>
        </authorList>
    </citation>
    <scope>NUCLEOTIDE SEQUENCE [LARGE SCALE GENOMIC DNA]</scope>
    <source>
        <strain>Madrid E</strain>
    </source>
</reference>
<accession>Q9ZE31</accession>
<dbReference type="EC" id="3.1.26.3" evidence="1"/>
<dbReference type="EMBL" id="AJ235270">
    <property type="protein sequence ID" value="CAA14586.1"/>
    <property type="molecule type" value="Genomic_DNA"/>
</dbReference>
<dbReference type="PIR" id="C71721">
    <property type="entry name" value="C71721"/>
</dbReference>
<dbReference type="RefSeq" id="NP_220509.1">
    <property type="nucleotide sequence ID" value="NC_000963.1"/>
</dbReference>
<dbReference type="RefSeq" id="WP_004597150.1">
    <property type="nucleotide sequence ID" value="NC_000963.1"/>
</dbReference>
<dbReference type="SMR" id="Q9ZE31"/>
<dbReference type="STRING" id="272947.gene:17555200"/>
<dbReference type="EnsemblBacteria" id="CAA14586">
    <property type="protein sequence ID" value="CAA14586"/>
    <property type="gene ID" value="CAA14586"/>
</dbReference>
<dbReference type="GeneID" id="57569245"/>
<dbReference type="KEGG" id="rpr:RP117"/>
<dbReference type="PATRIC" id="fig|272947.5.peg.119"/>
<dbReference type="eggNOG" id="COG0571">
    <property type="taxonomic scope" value="Bacteria"/>
</dbReference>
<dbReference type="HOGENOM" id="CLU_000907_1_3_5"/>
<dbReference type="OrthoDB" id="9805026at2"/>
<dbReference type="Proteomes" id="UP000002480">
    <property type="component" value="Chromosome"/>
</dbReference>
<dbReference type="GO" id="GO:0005737">
    <property type="term" value="C:cytoplasm"/>
    <property type="evidence" value="ECO:0007669"/>
    <property type="project" value="UniProtKB-SubCell"/>
</dbReference>
<dbReference type="GO" id="GO:0003725">
    <property type="term" value="F:double-stranded RNA binding"/>
    <property type="evidence" value="ECO:0007669"/>
    <property type="project" value="TreeGrafter"/>
</dbReference>
<dbReference type="GO" id="GO:0046872">
    <property type="term" value="F:metal ion binding"/>
    <property type="evidence" value="ECO:0007669"/>
    <property type="project" value="UniProtKB-KW"/>
</dbReference>
<dbReference type="GO" id="GO:0004525">
    <property type="term" value="F:ribonuclease III activity"/>
    <property type="evidence" value="ECO:0007669"/>
    <property type="project" value="UniProtKB-UniRule"/>
</dbReference>
<dbReference type="GO" id="GO:0019843">
    <property type="term" value="F:rRNA binding"/>
    <property type="evidence" value="ECO:0007669"/>
    <property type="project" value="UniProtKB-KW"/>
</dbReference>
<dbReference type="GO" id="GO:0006397">
    <property type="term" value="P:mRNA processing"/>
    <property type="evidence" value="ECO:0007669"/>
    <property type="project" value="UniProtKB-UniRule"/>
</dbReference>
<dbReference type="GO" id="GO:0010468">
    <property type="term" value="P:regulation of gene expression"/>
    <property type="evidence" value="ECO:0007669"/>
    <property type="project" value="TreeGrafter"/>
</dbReference>
<dbReference type="GO" id="GO:0006364">
    <property type="term" value="P:rRNA processing"/>
    <property type="evidence" value="ECO:0007669"/>
    <property type="project" value="UniProtKB-UniRule"/>
</dbReference>
<dbReference type="GO" id="GO:0008033">
    <property type="term" value="P:tRNA processing"/>
    <property type="evidence" value="ECO:0007669"/>
    <property type="project" value="UniProtKB-KW"/>
</dbReference>
<dbReference type="CDD" id="cd10845">
    <property type="entry name" value="DSRM_RNAse_III_family"/>
    <property type="match status" value="1"/>
</dbReference>
<dbReference type="CDD" id="cd00593">
    <property type="entry name" value="RIBOc"/>
    <property type="match status" value="1"/>
</dbReference>
<dbReference type="FunFam" id="1.10.1520.10:FF:000001">
    <property type="entry name" value="Ribonuclease 3"/>
    <property type="match status" value="1"/>
</dbReference>
<dbReference type="Gene3D" id="3.30.160.20">
    <property type="match status" value="1"/>
</dbReference>
<dbReference type="Gene3D" id="1.10.1520.10">
    <property type="entry name" value="Ribonuclease III domain"/>
    <property type="match status" value="1"/>
</dbReference>
<dbReference type="HAMAP" id="MF_00104">
    <property type="entry name" value="RNase_III"/>
    <property type="match status" value="1"/>
</dbReference>
<dbReference type="InterPro" id="IPR014720">
    <property type="entry name" value="dsRBD_dom"/>
</dbReference>
<dbReference type="InterPro" id="IPR011907">
    <property type="entry name" value="RNase_III"/>
</dbReference>
<dbReference type="InterPro" id="IPR000999">
    <property type="entry name" value="RNase_III_dom"/>
</dbReference>
<dbReference type="InterPro" id="IPR036389">
    <property type="entry name" value="RNase_III_sf"/>
</dbReference>
<dbReference type="NCBIfam" id="TIGR02191">
    <property type="entry name" value="RNaseIII"/>
    <property type="match status" value="1"/>
</dbReference>
<dbReference type="PANTHER" id="PTHR11207:SF0">
    <property type="entry name" value="RIBONUCLEASE 3"/>
    <property type="match status" value="1"/>
</dbReference>
<dbReference type="PANTHER" id="PTHR11207">
    <property type="entry name" value="RIBONUCLEASE III"/>
    <property type="match status" value="1"/>
</dbReference>
<dbReference type="Pfam" id="PF00035">
    <property type="entry name" value="dsrm"/>
    <property type="match status" value="1"/>
</dbReference>
<dbReference type="Pfam" id="PF14622">
    <property type="entry name" value="Ribonucleas_3_3"/>
    <property type="match status" value="1"/>
</dbReference>
<dbReference type="SMART" id="SM00358">
    <property type="entry name" value="DSRM"/>
    <property type="match status" value="1"/>
</dbReference>
<dbReference type="SMART" id="SM00535">
    <property type="entry name" value="RIBOc"/>
    <property type="match status" value="1"/>
</dbReference>
<dbReference type="SUPFAM" id="SSF54768">
    <property type="entry name" value="dsRNA-binding domain-like"/>
    <property type="match status" value="1"/>
</dbReference>
<dbReference type="SUPFAM" id="SSF69065">
    <property type="entry name" value="RNase III domain-like"/>
    <property type="match status" value="1"/>
</dbReference>
<dbReference type="PROSITE" id="PS50137">
    <property type="entry name" value="DS_RBD"/>
    <property type="match status" value="1"/>
</dbReference>
<dbReference type="PROSITE" id="PS00517">
    <property type="entry name" value="RNASE_3_1"/>
    <property type="match status" value="1"/>
</dbReference>
<dbReference type="PROSITE" id="PS50142">
    <property type="entry name" value="RNASE_3_2"/>
    <property type="match status" value="1"/>
</dbReference>
<comment type="function">
    <text evidence="1">Digests double-stranded RNA. Involved in the processing of primary rRNA transcript to yield the immediate precursors to the large and small rRNAs (23S and 16S). Processes some mRNAs, and tRNAs when they are encoded in the rRNA operon. Processes pre-crRNA and tracrRNA of type II CRISPR loci if present in the organism.</text>
</comment>
<comment type="catalytic activity">
    <reaction evidence="1">
        <text>Endonucleolytic cleavage to 5'-phosphomonoester.</text>
        <dbReference type="EC" id="3.1.26.3"/>
    </reaction>
</comment>
<comment type="cofactor">
    <cofactor evidence="1">
        <name>Mg(2+)</name>
        <dbReference type="ChEBI" id="CHEBI:18420"/>
    </cofactor>
</comment>
<comment type="subunit">
    <text evidence="1">Homodimer.</text>
</comment>
<comment type="subcellular location">
    <subcellularLocation>
        <location evidence="1">Cytoplasm</location>
    </subcellularLocation>
</comment>
<comment type="similarity">
    <text evidence="1">Belongs to the ribonuclease III family.</text>
</comment>
<proteinExistence type="inferred from homology"/>
<feature type="chain" id="PRO_0000180426" description="Ribonuclease 3">
    <location>
        <begin position="1"/>
        <end position="225"/>
    </location>
</feature>
<feature type="domain" description="RNase III" evidence="1">
    <location>
        <begin position="4"/>
        <end position="133"/>
    </location>
</feature>
<feature type="domain" description="DRBM" evidence="1">
    <location>
        <begin position="158"/>
        <end position="225"/>
    </location>
</feature>
<feature type="active site" evidence="1">
    <location>
        <position position="50"/>
    </location>
</feature>
<feature type="active site" evidence="1">
    <location>
        <position position="122"/>
    </location>
</feature>
<feature type="binding site" evidence="1">
    <location>
        <position position="46"/>
    </location>
    <ligand>
        <name>Mg(2+)</name>
        <dbReference type="ChEBI" id="CHEBI:18420"/>
    </ligand>
</feature>
<feature type="binding site" evidence="1">
    <location>
        <position position="119"/>
    </location>
    <ligand>
        <name>Mg(2+)</name>
        <dbReference type="ChEBI" id="CHEBI:18420"/>
    </ligand>
</feature>
<feature type="binding site" evidence="1">
    <location>
        <position position="122"/>
    </location>
    <ligand>
        <name>Mg(2+)</name>
        <dbReference type="ChEBI" id="CHEBI:18420"/>
    </ligand>
</feature>
<name>RNC_RICPR</name>
<organism>
    <name type="scientific">Rickettsia prowazekii (strain Madrid E)</name>
    <dbReference type="NCBI Taxonomy" id="272947"/>
    <lineage>
        <taxon>Bacteria</taxon>
        <taxon>Pseudomonadati</taxon>
        <taxon>Pseudomonadota</taxon>
        <taxon>Alphaproteobacteria</taxon>
        <taxon>Rickettsiales</taxon>
        <taxon>Rickettsiaceae</taxon>
        <taxon>Rickettsieae</taxon>
        <taxon>Rickettsia</taxon>
        <taxon>typhus group</taxon>
    </lineage>
</organism>
<evidence type="ECO:0000255" key="1">
    <source>
        <dbReference type="HAMAP-Rule" id="MF_00104"/>
    </source>
</evidence>
<keyword id="KW-0963">Cytoplasm</keyword>
<keyword id="KW-0255">Endonuclease</keyword>
<keyword id="KW-0378">Hydrolase</keyword>
<keyword id="KW-0460">Magnesium</keyword>
<keyword id="KW-0479">Metal-binding</keyword>
<keyword id="KW-0507">mRNA processing</keyword>
<keyword id="KW-0540">Nuclease</keyword>
<keyword id="KW-1185">Reference proteome</keyword>
<keyword id="KW-0694">RNA-binding</keyword>
<keyword id="KW-0698">rRNA processing</keyword>
<keyword id="KW-0699">rRNA-binding</keyword>
<keyword id="KW-0819">tRNA processing</keyword>